<feature type="signal peptide" evidence="4">
    <location>
        <begin position="1"/>
        <end position="24"/>
    </location>
</feature>
<feature type="chain" id="PRO_0000019909" description="Ectonucleoside triphosphate diphosphohydrolase 5">
    <location>
        <begin position="25"/>
        <end position="469"/>
    </location>
</feature>
<feature type="active site" description="Proton acceptor" evidence="3">
    <location>
        <position position="172"/>
    </location>
</feature>
<feature type="glycosylation site" description="N-linked (GlcNAc...) asparagine" evidence="4">
    <location>
        <position position="232"/>
    </location>
</feature>
<feature type="disulfide bond" evidence="1">
    <location>
        <begin position="272"/>
        <end position="303"/>
    </location>
</feature>
<feature type="disulfide bond" evidence="1">
    <location>
        <begin position="363"/>
        <end position="377"/>
    </location>
</feature>
<sequence>MATPWGAVFFLLMIACAGSTVFYREQQTWFEGVFLSSMCPANVSASTFYGIMFDAGSTGTRIHVYTFVQKAAGQLPFLEGEIFDSVKPGLSAFADQPKQGAQTVHALLEVAKDSIPRSHWKRTPVVLKATAGLRLLPEQKAQALLLEVEEIFKMSPFLVPDDSVSIMDGSYEGILAWVTVNFLTGQLHGHSQETMGTLDLGGASTQITFLPQFSKTLEQTPRDYLTSFEMFNSTFKLYTHSYLGFGLKAARLATLGALETEGTDGHTFRSACLPRWLEAEWIFGGVKYQYGGNQEGEMGFEPCYAEVLRVVQGKLHQPEEIRGSSFYAFSYYYDRAADTHLIDYEKGGVLKVEDFERKAREVCDNLESFTSGSPFLCMDLSYITALLKDGFGFADGTLLQLTKKVNNIETGWPGGHLSPAAVSGHLQLRLSVPLETCTSELLFTGRRGLGHFLQLRWRKPGLKPIDWLY</sequence>
<reference key="1">
    <citation type="journal article" date="1999" name="Oncogene">
        <title>The product of the cph oncogene is a truncated, nucleotide-binding protein that enhances cellular survival to stress.</title>
        <authorList>
            <person name="Velasco J.A."/>
            <person name="Avila M.A."/>
            <person name="Notario V."/>
        </authorList>
    </citation>
    <scope>NUCLEOTIDE SEQUENCE [MRNA]</scope>
    <scope>TISSUE SPECIFICITY</scope>
    <scope>MISCELLANEOUS</scope>
</reference>
<proteinExistence type="evidence at transcript level"/>
<comment type="function">
    <text evidence="2 3">Hydrolyzes nucleoside diphosphates with a preference for GDP, IDP and UDP compared to ADP and CDP (By similarity). In the lumen of the endoplasmic reticulum, hydrolyzes UDP that acts as an end-product feedback inhibitor of the UDP-Glc:glycoprotein glucosyltransferases. UMP can be transported back by an UDP-sugar antiporter to the cytosol where it is consumed to regenerate UDP-glucose. Therefore, it positively regulates protein reglucosylation by clearing UDP from the ER lumen and by promoting the regeneration of UDP-glucose. Protein reglucosylation is essential to proper glycoprotein folding and quality control in the ER (By similarity).</text>
</comment>
<comment type="catalytic activity">
    <reaction evidence="2">
        <text>a ribonucleoside 5'-diphosphate + H2O = a ribonucleoside 5'-phosphate + phosphate + H(+)</text>
        <dbReference type="Rhea" id="RHEA:36799"/>
        <dbReference type="ChEBI" id="CHEBI:15377"/>
        <dbReference type="ChEBI" id="CHEBI:15378"/>
        <dbReference type="ChEBI" id="CHEBI:43474"/>
        <dbReference type="ChEBI" id="CHEBI:57930"/>
        <dbReference type="ChEBI" id="CHEBI:58043"/>
        <dbReference type="EC" id="3.6.1.6"/>
    </reaction>
    <physiologicalReaction direction="left-to-right" evidence="2">
        <dbReference type="Rhea" id="RHEA:36800"/>
    </physiologicalReaction>
</comment>
<comment type="catalytic activity">
    <reaction evidence="2">
        <text>GDP + H2O = GMP + phosphate + H(+)</text>
        <dbReference type="Rhea" id="RHEA:22156"/>
        <dbReference type="ChEBI" id="CHEBI:15377"/>
        <dbReference type="ChEBI" id="CHEBI:15378"/>
        <dbReference type="ChEBI" id="CHEBI:43474"/>
        <dbReference type="ChEBI" id="CHEBI:58115"/>
        <dbReference type="ChEBI" id="CHEBI:58189"/>
        <dbReference type="EC" id="3.6.1.6"/>
    </reaction>
    <physiologicalReaction direction="left-to-right" evidence="2">
        <dbReference type="Rhea" id="RHEA:22157"/>
    </physiologicalReaction>
</comment>
<comment type="catalytic activity">
    <reaction evidence="2">
        <text>UDP + H2O = UMP + phosphate + H(+)</text>
        <dbReference type="Rhea" id="RHEA:64876"/>
        <dbReference type="ChEBI" id="CHEBI:15377"/>
        <dbReference type="ChEBI" id="CHEBI:15378"/>
        <dbReference type="ChEBI" id="CHEBI:43474"/>
        <dbReference type="ChEBI" id="CHEBI:57865"/>
        <dbReference type="ChEBI" id="CHEBI:58223"/>
        <dbReference type="EC" id="3.6.1.6"/>
    </reaction>
    <physiologicalReaction direction="left-to-right" evidence="2">
        <dbReference type="Rhea" id="RHEA:64877"/>
    </physiologicalReaction>
</comment>
<comment type="catalytic activity">
    <reaction evidence="2">
        <text>IDP + H2O = IMP + phosphate + H(+)</text>
        <dbReference type="Rhea" id="RHEA:35207"/>
        <dbReference type="ChEBI" id="CHEBI:15377"/>
        <dbReference type="ChEBI" id="CHEBI:15378"/>
        <dbReference type="ChEBI" id="CHEBI:43474"/>
        <dbReference type="ChEBI" id="CHEBI:58053"/>
        <dbReference type="ChEBI" id="CHEBI:58280"/>
        <dbReference type="EC" id="3.6.1.6"/>
    </reaction>
    <physiologicalReaction direction="left-to-right" evidence="2">
        <dbReference type="Rhea" id="RHEA:35208"/>
    </physiologicalReaction>
</comment>
<comment type="catalytic activity">
    <reaction evidence="2">
        <text>CDP + H2O = CMP + phosphate + H(+)</text>
        <dbReference type="Rhea" id="RHEA:64880"/>
        <dbReference type="ChEBI" id="CHEBI:15377"/>
        <dbReference type="ChEBI" id="CHEBI:15378"/>
        <dbReference type="ChEBI" id="CHEBI:43474"/>
        <dbReference type="ChEBI" id="CHEBI:58069"/>
        <dbReference type="ChEBI" id="CHEBI:60377"/>
        <dbReference type="EC" id="3.6.1.6"/>
    </reaction>
    <physiologicalReaction direction="left-to-right" evidence="2">
        <dbReference type="Rhea" id="RHEA:64881"/>
    </physiologicalReaction>
</comment>
<comment type="catalytic activity">
    <reaction evidence="2">
        <text>ADP + H2O = AMP + phosphate + H(+)</text>
        <dbReference type="Rhea" id="RHEA:61436"/>
        <dbReference type="ChEBI" id="CHEBI:15377"/>
        <dbReference type="ChEBI" id="CHEBI:15378"/>
        <dbReference type="ChEBI" id="CHEBI:43474"/>
        <dbReference type="ChEBI" id="CHEBI:456215"/>
        <dbReference type="ChEBI" id="CHEBI:456216"/>
        <dbReference type="EC" id="3.6.1.6"/>
    </reaction>
    <physiologicalReaction direction="left-to-right" evidence="2">
        <dbReference type="Rhea" id="RHEA:61437"/>
    </physiologicalReaction>
</comment>
<comment type="cofactor">
    <cofactor evidence="2">
        <name>Ca(2+)</name>
        <dbReference type="ChEBI" id="CHEBI:29108"/>
    </cofactor>
    <cofactor evidence="2">
        <name>Mg(2+)</name>
        <dbReference type="ChEBI" id="CHEBI:18420"/>
    </cofactor>
</comment>
<comment type="pathway">
    <text evidence="3">Protein modification; protein glycosylation.</text>
</comment>
<comment type="subunit">
    <text evidence="2">Monomer; active form. Homodimer; disulfide-linked. Homodimers are enzymatically inactive.</text>
</comment>
<comment type="subcellular location">
    <subcellularLocation>
        <location evidence="3">Endoplasmic reticulum</location>
    </subcellularLocation>
    <subcellularLocation>
        <location evidence="2">Secreted</location>
    </subcellularLocation>
</comment>
<comment type="tissue specificity">
    <text evidence="5">Expressed in fetal cells and most adult tissues.</text>
</comment>
<comment type="PTM">
    <text evidence="3">N-glycosylated; high-mannose type.</text>
</comment>
<comment type="miscellaneous">
    <text evidence="8">ENTPD5 has transforming capacity and tumorigenic potential.</text>
</comment>
<comment type="similarity">
    <text evidence="7">Belongs to the GDA1/CD39 NTPase family.</text>
</comment>
<protein>
    <recommendedName>
        <fullName evidence="3">Ectonucleoside triphosphate diphosphohydrolase 5</fullName>
        <shortName>NTPDase 5</shortName>
        <ecNumber evidence="3">3.6.1.6</ecNumber>
    </recommendedName>
    <alternativeName>
        <fullName>ER-UDPase</fullName>
    </alternativeName>
    <alternativeName>
        <fullName>Guanosine-diphosphatase ENTPD5</fullName>
        <shortName>GDPase ENTPD5</shortName>
    </alternativeName>
    <alternativeName>
        <fullName>Nucleoside diphosphatase</fullName>
    </alternativeName>
    <alternativeName>
        <fullName evidence="6">Proto-oncogene cph</fullName>
    </alternativeName>
    <alternativeName>
        <fullName>Uridine-diphosphatase ENTPD5</fullName>
        <shortName>UDPase ENTPD5</shortName>
    </alternativeName>
</protein>
<organism>
    <name type="scientific">Mesocricetus auratus</name>
    <name type="common">Golden hamster</name>
    <dbReference type="NCBI Taxonomy" id="10036"/>
    <lineage>
        <taxon>Eukaryota</taxon>
        <taxon>Metazoa</taxon>
        <taxon>Chordata</taxon>
        <taxon>Craniata</taxon>
        <taxon>Vertebrata</taxon>
        <taxon>Euteleostomi</taxon>
        <taxon>Mammalia</taxon>
        <taxon>Eutheria</taxon>
        <taxon>Euarchontoglires</taxon>
        <taxon>Glires</taxon>
        <taxon>Rodentia</taxon>
        <taxon>Myomorpha</taxon>
        <taxon>Muroidea</taxon>
        <taxon>Cricetidae</taxon>
        <taxon>Cricetinae</taxon>
        <taxon>Mesocricetus</taxon>
    </lineage>
</organism>
<dbReference type="EC" id="3.6.1.6" evidence="3"/>
<dbReference type="EMBL" id="AF084568">
    <property type="protein sequence ID" value="AAF22931.1"/>
    <property type="status" value="ALT_TERM"/>
    <property type="molecule type" value="mRNA"/>
</dbReference>
<dbReference type="EMBL" id="AF084569">
    <property type="protein sequence ID" value="AAF22932.1"/>
    <property type="molecule type" value="mRNA"/>
</dbReference>
<dbReference type="RefSeq" id="NP_001268880.1">
    <property type="nucleotide sequence ID" value="NM_001281951.1"/>
</dbReference>
<dbReference type="SMR" id="Q9QYC8"/>
<dbReference type="STRING" id="10036.ENSMAUP00000014642"/>
<dbReference type="GlyCosmos" id="Q9QYC8">
    <property type="glycosylation" value="1 site, No reported glycans"/>
</dbReference>
<dbReference type="GeneID" id="101836947"/>
<dbReference type="KEGG" id="maua:101836947"/>
<dbReference type="CTD" id="957"/>
<dbReference type="eggNOG" id="KOG1385">
    <property type="taxonomic scope" value="Eukaryota"/>
</dbReference>
<dbReference type="OrthoDB" id="6372431at2759"/>
<dbReference type="UniPathway" id="UPA00378"/>
<dbReference type="Proteomes" id="UP000189706">
    <property type="component" value="Unplaced"/>
</dbReference>
<dbReference type="GO" id="GO:0005783">
    <property type="term" value="C:endoplasmic reticulum"/>
    <property type="evidence" value="ECO:0000250"/>
    <property type="project" value="UniProtKB"/>
</dbReference>
<dbReference type="GO" id="GO:0005576">
    <property type="term" value="C:extracellular region"/>
    <property type="evidence" value="ECO:0007669"/>
    <property type="project" value="UniProtKB-SubCell"/>
</dbReference>
<dbReference type="GO" id="GO:0043262">
    <property type="term" value="F:ADP phosphatase activity"/>
    <property type="evidence" value="ECO:0007669"/>
    <property type="project" value="RHEA"/>
</dbReference>
<dbReference type="GO" id="GO:0036384">
    <property type="term" value="F:CDP phosphatase activity"/>
    <property type="evidence" value="ECO:0007669"/>
    <property type="project" value="RHEA"/>
</dbReference>
<dbReference type="GO" id="GO:0004382">
    <property type="term" value="F:GDP phosphatase activity"/>
    <property type="evidence" value="ECO:0000250"/>
    <property type="project" value="UniProtKB"/>
</dbReference>
<dbReference type="GO" id="GO:1990003">
    <property type="term" value="F:IDP phosphatase activity"/>
    <property type="evidence" value="ECO:0007669"/>
    <property type="project" value="RHEA"/>
</dbReference>
<dbReference type="GO" id="GO:0045134">
    <property type="term" value="F:UDP phosphatase activity"/>
    <property type="evidence" value="ECO:0000250"/>
    <property type="project" value="UniProtKB"/>
</dbReference>
<dbReference type="GO" id="GO:0051084">
    <property type="term" value="P:'de novo' post-translational protein folding"/>
    <property type="evidence" value="ECO:0000250"/>
    <property type="project" value="UniProtKB"/>
</dbReference>
<dbReference type="GO" id="GO:0006487">
    <property type="term" value="P:protein N-linked glycosylation"/>
    <property type="evidence" value="ECO:0000250"/>
    <property type="project" value="UniProtKB"/>
</dbReference>
<dbReference type="GO" id="GO:0006256">
    <property type="term" value="P:UDP catabolic process"/>
    <property type="evidence" value="ECO:0000250"/>
    <property type="project" value="UniProtKB"/>
</dbReference>
<dbReference type="GO" id="GO:0006011">
    <property type="term" value="P:UDP-alpha-D-glucose metabolic process"/>
    <property type="evidence" value="ECO:0000250"/>
    <property type="project" value="UniProtKB"/>
</dbReference>
<dbReference type="CDD" id="cd24114">
    <property type="entry name" value="ASKHA_NBD_NTPDase5"/>
    <property type="match status" value="1"/>
</dbReference>
<dbReference type="FunFam" id="3.30.420.150:FF:000004">
    <property type="entry name" value="Ectonucleoside triphosphate diphosphohydrolase 5"/>
    <property type="match status" value="1"/>
</dbReference>
<dbReference type="FunFam" id="3.30.420.40:FF:000052">
    <property type="entry name" value="Ectonucleoside triphosphate diphosphohydrolase 5"/>
    <property type="match status" value="1"/>
</dbReference>
<dbReference type="Gene3D" id="3.30.420.40">
    <property type="match status" value="1"/>
</dbReference>
<dbReference type="Gene3D" id="3.30.420.150">
    <property type="entry name" value="Exopolyphosphatase. Domain 2"/>
    <property type="match status" value="1"/>
</dbReference>
<dbReference type="InterPro" id="IPR000407">
    <property type="entry name" value="GDA1_CD39_NTPase"/>
</dbReference>
<dbReference type="PANTHER" id="PTHR11782">
    <property type="entry name" value="ADENOSINE/GUANOSINE DIPHOSPHATASE"/>
    <property type="match status" value="1"/>
</dbReference>
<dbReference type="PANTHER" id="PTHR11782:SF35">
    <property type="entry name" value="NUCLEOSIDE DIPHOSPHATE PHOSPHATASE ENTPD5"/>
    <property type="match status" value="1"/>
</dbReference>
<dbReference type="Pfam" id="PF01150">
    <property type="entry name" value="GDA1_CD39"/>
    <property type="match status" value="1"/>
</dbReference>
<dbReference type="PROSITE" id="PS01238">
    <property type="entry name" value="GDA1_CD39_NTPASE"/>
    <property type="match status" value="1"/>
</dbReference>
<name>ENTP5_MESAU</name>
<evidence type="ECO:0000250" key="1"/>
<evidence type="ECO:0000250" key="2">
    <source>
        <dbReference type="UniProtKB" id="O75356"/>
    </source>
</evidence>
<evidence type="ECO:0000250" key="3">
    <source>
        <dbReference type="UniProtKB" id="Q9WUZ9"/>
    </source>
</evidence>
<evidence type="ECO:0000255" key="4"/>
<evidence type="ECO:0000269" key="5">
    <source>
    </source>
</evidence>
<evidence type="ECO:0000303" key="6">
    <source>
    </source>
</evidence>
<evidence type="ECO:0000305" key="7"/>
<evidence type="ECO:0000305" key="8">
    <source>
    </source>
</evidence>
<accession>Q9QYC8</accession>
<accession>Q9QYC9</accession>
<keyword id="KW-0106">Calcium</keyword>
<keyword id="KW-1015">Disulfide bond</keyword>
<keyword id="KW-0256">Endoplasmic reticulum</keyword>
<keyword id="KW-0325">Glycoprotein</keyword>
<keyword id="KW-0378">Hydrolase</keyword>
<keyword id="KW-0460">Magnesium</keyword>
<keyword id="KW-0656">Proto-oncogene</keyword>
<keyword id="KW-1185">Reference proteome</keyword>
<keyword id="KW-0964">Secreted</keyword>
<keyword id="KW-0732">Signal</keyword>
<gene>
    <name type="primary">ENTPD5</name>
    <name type="synonym">CD39L4</name>
    <name type="synonym">CPH</name>
</gene>